<reference key="1">
    <citation type="submission" date="2006-09" db="EMBL/GenBank/DDBJ databases">
        <title>Complete sequence of chromosome 1 of Shewanella sp. ANA-3.</title>
        <authorList>
            <person name="Copeland A."/>
            <person name="Lucas S."/>
            <person name="Lapidus A."/>
            <person name="Barry K."/>
            <person name="Detter J.C."/>
            <person name="Glavina del Rio T."/>
            <person name="Hammon N."/>
            <person name="Israni S."/>
            <person name="Dalin E."/>
            <person name="Tice H."/>
            <person name="Pitluck S."/>
            <person name="Chertkov O."/>
            <person name="Brettin T."/>
            <person name="Bruce D."/>
            <person name="Han C."/>
            <person name="Tapia R."/>
            <person name="Gilna P."/>
            <person name="Schmutz J."/>
            <person name="Larimer F."/>
            <person name="Land M."/>
            <person name="Hauser L."/>
            <person name="Kyrpides N."/>
            <person name="Kim E."/>
            <person name="Newman D."/>
            <person name="Salticov C."/>
            <person name="Konstantinidis K."/>
            <person name="Klappenback J."/>
            <person name="Tiedje J."/>
            <person name="Richardson P."/>
        </authorList>
    </citation>
    <scope>NUCLEOTIDE SEQUENCE [LARGE SCALE GENOMIC DNA]</scope>
    <source>
        <strain>ANA-3</strain>
    </source>
</reference>
<sequence length="257" mass="27969">MLAKRIVPCLDVKDGCVVKGVQFRNHEIVGDIVPLAARYAAEGADELVFYDITASAHDRVVDKSWVSRVAEQIDIPFCVAGGIKTIGQARELLAFGADKISVNSPALSDPSLISRLQDEFGRQCIVIGIDSFYDAASDSYKVKQFTGDEAATKETAWYTQDWVEEVQKRGCGEIVLNVMNQDGVRGGYDIKQLSLVRQLCDVPLIASGGAGTMTHFRDVFIEAKVDAALAASVFHKAIINIGELKQYLAAEGIAIRQ</sequence>
<comment type="function">
    <text evidence="1">IGPS catalyzes the conversion of PRFAR and glutamine to IGP, AICAR and glutamate. The HisF subunit catalyzes the cyclization activity that produces IGP and AICAR from PRFAR using the ammonia provided by the HisH subunit.</text>
</comment>
<comment type="catalytic activity">
    <reaction evidence="1">
        <text>5-[(5-phospho-1-deoxy-D-ribulos-1-ylimino)methylamino]-1-(5-phospho-beta-D-ribosyl)imidazole-4-carboxamide + L-glutamine = D-erythro-1-(imidazol-4-yl)glycerol 3-phosphate + 5-amino-1-(5-phospho-beta-D-ribosyl)imidazole-4-carboxamide + L-glutamate + H(+)</text>
        <dbReference type="Rhea" id="RHEA:24793"/>
        <dbReference type="ChEBI" id="CHEBI:15378"/>
        <dbReference type="ChEBI" id="CHEBI:29985"/>
        <dbReference type="ChEBI" id="CHEBI:58278"/>
        <dbReference type="ChEBI" id="CHEBI:58359"/>
        <dbReference type="ChEBI" id="CHEBI:58475"/>
        <dbReference type="ChEBI" id="CHEBI:58525"/>
        <dbReference type="EC" id="4.3.2.10"/>
    </reaction>
</comment>
<comment type="pathway">
    <text evidence="1">Amino-acid biosynthesis; L-histidine biosynthesis; L-histidine from 5-phospho-alpha-D-ribose 1-diphosphate: step 5/9.</text>
</comment>
<comment type="subunit">
    <text evidence="1">Heterodimer of HisH and HisF.</text>
</comment>
<comment type="subcellular location">
    <subcellularLocation>
        <location evidence="1">Cytoplasm</location>
    </subcellularLocation>
</comment>
<comment type="similarity">
    <text evidence="1">Belongs to the HisA/HisF family.</text>
</comment>
<evidence type="ECO:0000255" key="1">
    <source>
        <dbReference type="HAMAP-Rule" id="MF_01013"/>
    </source>
</evidence>
<organism>
    <name type="scientific">Shewanella sp. (strain ANA-3)</name>
    <dbReference type="NCBI Taxonomy" id="94122"/>
    <lineage>
        <taxon>Bacteria</taxon>
        <taxon>Pseudomonadati</taxon>
        <taxon>Pseudomonadota</taxon>
        <taxon>Gammaproteobacteria</taxon>
        <taxon>Alteromonadales</taxon>
        <taxon>Shewanellaceae</taxon>
        <taxon>Shewanella</taxon>
    </lineage>
</organism>
<gene>
    <name evidence="1" type="primary">hisF</name>
    <name type="ordered locus">Shewana3_1848</name>
</gene>
<dbReference type="EC" id="4.3.2.10" evidence="1"/>
<dbReference type="EMBL" id="CP000469">
    <property type="protein sequence ID" value="ABK48079.1"/>
    <property type="molecule type" value="Genomic_DNA"/>
</dbReference>
<dbReference type="RefSeq" id="WP_011716853.1">
    <property type="nucleotide sequence ID" value="NC_008577.1"/>
</dbReference>
<dbReference type="SMR" id="A0KWB0"/>
<dbReference type="STRING" id="94122.Shewana3_1848"/>
<dbReference type="KEGG" id="shn:Shewana3_1848"/>
<dbReference type="eggNOG" id="COG0107">
    <property type="taxonomic scope" value="Bacteria"/>
</dbReference>
<dbReference type="HOGENOM" id="CLU_048577_4_0_6"/>
<dbReference type="OrthoDB" id="9781903at2"/>
<dbReference type="UniPathway" id="UPA00031">
    <property type="reaction ID" value="UER00010"/>
</dbReference>
<dbReference type="Proteomes" id="UP000002589">
    <property type="component" value="Chromosome"/>
</dbReference>
<dbReference type="GO" id="GO:0005737">
    <property type="term" value="C:cytoplasm"/>
    <property type="evidence" value="ECO:0007669"/>
    <property type="project" value="UniProtKB-SubCell"/>
</dbReference>
<dbReference type="GO" id="GO:0000107">
    <property type="term" value="F:imidazoleglycerol-phosphate synthase activity"/>
    <property type="evidence" value="ECO:0007669"/>
    <property type="project" value="UniProtKB-UniRule"/>
</dbReference>
<dbReference type="GO" id="GO:0016829">
    <property type="term" value="F:lyase activity"/>
    <property type="evidence" value="ECO:0007669"/>
    <property type="project" value="UniProtKB-KW"/>
</dbReference>
<dbReference type="GO" id="GO:0000105">
    <property type="term" value="P:L-histidine biosynthetic process"/>
    <property type="evidence" value="ECO:0007669"/>
    <property type="project" value="UniProtKB-UniRule"/>
</dbReference>
<dbReference type="CDD" id="cd04731">
    <property type="entry name" value="HisF"/>
    <property type="match status" value="1"/>
</dbReference>
<dbReference type="FunFam" id="3.20.20.70:FF:000006">
    <property type="entry name" value="Imidazole glycerol phosphate synthase subunit HisF"/>
    <property type="match status" value="1"/>
</dbReference>
<dbReference type="Gene3D" id="3.20.20.70">
    <property type="entry name" value="Aldolase class I"/>
    <property type="match status" value="1"/>
</dbReference>
<dbReference type="HAMAP" id="MF_01013">
    <property type="entry name" value="HisF"/>
    <property type="match status" value="1"/>
</dbReference>
<dbReference type="InterPro" id="IPR013785">
    <property type="entry name" value="Aldolase_TIM"/>
</dbReference>
<dbReference type="InterPro" id="IPR006062">
    <property type="entry name" value="His_biosynth"/>
</dbReference>
<dbReference type="InterPro" id="IPR004651">
    <property type="entry name" value="HisF"/>
</dbReference>
<dbReference type="InterPro" id="IPR050064">
    <property type="entry name" value="IGPS_HisA/HisF"/>
</dbReference>
<dbReference type="InterPro" id="IPR011060">
    <property type="entry name" value="RibuloseP-bd_barrel"/>
</dbReference>
<dbReference type="NCBIfam" id="TIGR00735">
    <property type="entry name" value="hisF"/>
    <property type="match status" value="1"/>
</dbReference>
<dbReference type="PANTHER" id="PTHR21235:SF2">
    <property type="entry name" value="IMIDAZOLE GLYCEROL PHOSPHATE SYNTHASE HISHF"/>
    <property type="match status" value="1"/>
</dbReference>
<dbReference type="PANTHER" id="PTHR21235">
    <property type="entry name" value="IMIDAZOLE GLYCEROL PHOSPHATE SYNTHASE SUBUNIT HISF/H IGP SYNTHASE SUBUNIT HISF/H"/>
    <property type="match status" value="1"/>
</dbReference>
<dbReference type="Pfam" id="PF00977">
    <property type="entry name" value="His_biosynth"/>
    <property type="match status" value="1"/>
</dbReference>
<dbReference type="SUPFAM" id="SSF51366">
    <property type="entry name" value="Ribulose-phoshate binding barrel"/>
    <property type="match status" value="1"/>
</dbReference>
<feature type="chain" id="PRO_1000063148" description="Imidazole glycerol phosphate synthase subunit HisF">
    <location>
        <begin position="1"/>
        <end position="257"/>
    </location>
</feature>
<feature type="active site" evidence="1">
    <location>
        <position position="11"/>
    </location>
</feature>
<feature type="active site" evidence="1">
    <location>
        <position position="130"/>
    </location>
</feature>
<name>HIS6_SHESA</name>
<accession>A0KWB0</accession>
<protein>
    <recommendedName>
        <fullName evidence="1">Imidazole glycerol phosphate synthase subunit HisF</fullName>
        <ecNumber evidence="1">4.3.2.10</ecNumber>
    </recommendedName>
    <alternativeName>
        <fullName evidence="1">IGP synthase cyclase subunit</fullName>
    </alternativeName>
    <alternativeName>
        <fullName evidence="1">IGP synthase subunit HisF</fullName>
    </alternativeName>
    <alternativeName>
        <fullName evidence="1">ImGP synthase subunit HisF</fullName>
        <shortName evidence="1">IGPS subunit HisF</shortName>
    </alternativeName>
</protein>
<keyword id="KW-0028">Amino-acid biosynthesis</keyword>
<keyword id="KW-0963">Cytoplasm</keyword>
<keyword id="KW-0368">Histidine biosynthesis</keyword>
<keyword id="KW-0456">Lyase</keyword>
<proteinExistence type="inferred from homology"/>